<organism>
    <name type="scientific">Bacillus subtilis (strain 168)</name>
    <dbReference type="NCBI Taxonomy" id="224308"/>
    <lineage>
        <taxon>Bacteria</taxon>
        <taxon>Bacillati</taxon>
        <taxon>Bacillota</taxon>
        <taxon>Bacilli</taxon>
        <taxon>Bacillales</taxon>
        <taxon>Bacillaceae</taxon>
        <taxon>Bacillus</taxon>
    </lineage>
</organism>
<name>ARAQ_BACSU</name>
<sequence length="281" mass="31846">MLRHSPQFSVYRIALTLFFMMLSLLYLFPIFCLLLGSLKPSSELLRVGLNLDIDPKVMSFDNYTFLFNGGSIYFKWFFNSLVLGLFTTVLTLFFSSMIGYGLAVYDFKGRNIIFVLVLIIMMVPLEVMMLPLFKLTVGLHLIDSYTGVILPFIVSPVAVFFFRQYALGLPRDLLDSARMDGCTEFGIFFRIMAPLMKPAFGAMIILQSLNSWNNFLWPLIVLRSKEMFTLPIGLSSLLSPYGNNYDMLISGSVFAILPVIIIFLFFQKYFISGLTVGGVKG</sequence>
<feature type="chain" id="PRO_0000059956" description="Arabinooligosaccharides transport system permease protein AraQ">
    <location>
        <begin position="1"/>
        <end position="281"/>
    </location>
</feature>
<feature type="transmembrane region" description="Helical" evidence="1">
    <location>
        <begin position="15"/>
        <end position="35"/>
    </location>
</feature>
<feature type="transmembrane region" description="Helical" evidence="1">
    <location>
        <begin position="81"/>
        <end position="101"/>
    </location>
</feature>
<feature type="transmembrane region" description="Helical" evidence="1">
    <location>
        <begin position="112"/>
        <end position="132"/>
    </location>
</feature>
<feature type="transmembrane region" description="Helical" evidence="1">
    <location>
        <begin position="142"/>
        <end position="162"/>
    </location>
</feature>
<feature type="transmembrane region" description="Helical" evidence="1">
    <location>
        <begin position="185"/>
        <end position="205"/>
    </location>
</feature>
<feature type="transmembrane region" description="Helical" evidence="1">
    <location>
        <begin position="247"/>
        <end position="267"/>
    </location>
</feature>
<feature type="domain" description="ABC transmembrane type-1" evidence="1">
    <location>
        <begin position="77"/>
        <end position="266"/>
    </location>
</feature>
<feature type="mutagenesis site" description="Negative impact in the growth rate in the presence of arabinotriose." evidence="4">
    <original>D</original>
    <variation>A</variation>
    <location>
        <position position="180"/>
    </location>
</feature>
<feature type="sequence conflict" description="In Ref. 2; CAA99594." evidence="7" ref="2">
    <original>FIV</original>
    <variation>LIA</variation>
    <location>
        <begin position="152"/>
        <end position="154"/>
    </location>
</feature>
<gene>
    <name evidence="6" type="primary">araQ</name>
    <name type="synonym">yseE</name>
    <name type="ordered locus">BSU28730</name>
</gene>
<proteinExistence type="evidence at protein level"/>
<keyword id="KW-1003">Cell membrane</keyword>
<keyword id="KW-0472">Membrane</keyword>
<keyword id="KW-1185">Reference proteome</keyword>
<keyword id="KW-0762">Sugar transport</keyword>
<keyword id="KW-0812">Transmembrane</keyword>
<keyword id="KW-1133">Transmembrane helix</keyword>
<keyword id="KW-0813">Transport</keyword>
<evidence type="ECO:0000255" key="1">
    <source>
        <dbReference type="PROSITE-ProRule" id="PRU00441"/>
    </source>
</evidence>
<evidence type="ECO:0000269" key="2">
    <source>
    </source>
</evidence>
<evidence type="ECO:0000269" key="3">
    <source>
    </source>
</evidence>
<evidence type="ECO:0000269" key="4">
    <source>
    </source>
</evidence>
<evidence type="ECO:0000269" key="5">
    <source>
    </source>
</evidence>
<evidence type="ECO:0000303" key="6">
    <source>
    </source>
</evidence>
<evidence type="ECO:0000305" key="7"/>
<evidence type="ECO:0000305" key="8">
    <source>
    </source>
</evidence>
<comment type="function">
    <text evidence="3 8">Part of the ABC transporter complex AraNPQ involved in the uptake of arabinooligosaccharides. Transports alpha-1,5-arabinooligosaccharides, at least up to four L-arabinosyl units (PubMed:20693325). Responsible for the translocation of the substrate across the membrane (Probable).</text>
</comment>
<comment type="subunit">
    <text evidence="3">The complex is composed of two ATP-binding proteins (MsmX), two transmembrane proteins (AraP and AraQ) and a solute-binding protein (AraN).</text>
</comment>
<comment type="subcellular location">
    <subcellularLocation>
        <location evidence="7">Cell membrane</location>
        <topology evidence="1">Multi-pass membrane protein</topology>
    </subcellularLocation>
</comment>
<comment type="induction">
    <text evidence="2 5">Transcription is repressed by glucose and by the binding of AraR to the operon promoter. L-arabinose acts as an inducer by inhibiting the binding of AraR to the DNA, thus allowing expression of the gene.</text>
</comment>
<comment type="similarity">
    <text evidence="7">Belongs to the binding-protein-dependent transport system permease family. MalFG subfamily.</text>
</comment>
<protein>
    <recommendedName>
        <fullName evidence="7">Arabinooligosaccharides transport system permease protein AraQ</fullName>
    </recommendedName>
</protein>
<dbReference type="EMBL" id="X89810">
    <property type="protein sequence ID" value="CAA61936.1"/>
    <property type="molecule type" value="Genomic_DNA"/>
</dbReference>
<dbReference type="EMBL" id="Z75208">
    <property type="protein sequence ID" value="CAA99594.1"/>
    <property type="molecule type" value="Genomic_DNA"/>
</dbReference>
<dbReference type="EMBL" id="AL009126">
    <property type="protein sequence ID" value="CAB14833.2"/>
    <property type="molecule type" value="Genomic_DNA"/>
</dbReference>
<dbReference type="PIR" id="C69588">
    <property type="entry name" value="C69588"/>
</dbReference>
<dbReference type="RefSeq" id="NP_390751.2">
    <property type="nucleotide sequence ID" value="NC_000964.3"/>
</dbReference>
<dbReference type="RefSeq" id="WP_003229508.1">
    <property type="nucleotide sequence ID" value="NZ_OZ025638.1"/>
</dbReference>
<dbReference type="SMR" id="P94530"/>
<dbReference type="FunCoup" id="P94530">
    <property type="interactions" value="201"/>
</dbReference>
<dbReference type="STRING" id="224308.BSU28730"/>
<dbReference type="TCDB" id="3.A.1.1.34">
    <property type="family name" value="the atp-binding cassette (abc) superfamily"/>
</dbReference>
<dbReference type="PaxDb" id="224308-BSU28730"/>
<dbReference type="EnsemblBacteria" id="CAB14833">
    <property type="protein sequence ID" value="CAB14833"/>
    <property type="gene ID" value="BSU_28730"/>
</dbReference>
<dbReference type="GeneID" id="937434"/>
<dbReference type="KEGG" id="bsu:BSU28730"/>
<dbReference type="PATRIC" id="fig|224308.179.peg.3121"/>
<dbReference type="eggNOG" id="COG0395">
    <property type="taxonomic scope" value="Bacteria"/>
</dbReference>
<dbReference type="InParanoid" id="P94530"/>
<dbReference type="OrthoDB" id="9771544at2"/>
<dbReference type="PhylomeDB" id="P94530"/>
<dbReference type="BioCyc" id="BSUB:BSU28730-MONOMER"/>
<dbReference type="Proteomes" id="UP000001570">
    <property type="component" value="Chromosome"/>
</dbReference>
<dbReference type="GO" id="GO:0005886">
    <property type="term" value="C:plasma membrane"/>
    <property type="evidence" value="ECO:0007669"/>
    <property type="project" value="UniProtKB-SubCell"/>
</dbReference>
<dbReference type="GO" id="GO:0055085">
    <property type="term" value="P:transmembrane transport"/>
    <property type="evidence" value="ECO:0007669"/>
    <property type="project" value="InterPro"/>
</dbReference>
<dbReference type="CDD" id="cd06261">
    <property type="entry name" value="TM_PBP2"/>
    <property type="match status" value="1"/>
</dbReference>
<dbReference type="Gene3D" id="1.10.3720.10">
    <property type="entry name" value="MetI-like"/>
    <property type="match status" value="1"/>
</dbReference>
<dbReference type="InterPro" id="IPR000515">
    <property type="entry name" value="MetI-like"/>
</dbReference>
<dbReference type="InterPro" id="IPR035906">
    <property type="entry name" value="MetI-like_sf"/>
</dbReference>
<dbReference type="PANTHER" id="PTHR43744">
    <property type="entry name" value="ABC TRANSPORTER PERMEASE PROTEIN MG189-RELATED-RELATED"/>
    <property type="match status" value="1"/>
</dbReference>
<dbReference type="PANTHER" id="PTHR43744:SF2">
    <property type="entry name" value="ARABINOOLIGOSACCHARIDES TRANSPORT SYSTEM PERMEASE PROTEIN ARAQ"/>
    <property type="match status" value="1"/>
</dbReference>
<dbReference type="Pfam" id="PF00528">
    <property type="entry name" value="BPD_transp_1"/>
    <property type="match status" value="1"/>
</dbReference>
<dbReference type="SUPFAM" id="SSF161098">
    <property type="entry name" value="MetI-like"/>
    <property type="match status" value="1"/>
</dbReference>
<dbReference type="PROSITE" id="PS50928">
    <property type="entry name" value="ABC_TM1"/>
    <property type="match status" value="1"/>
</dbReference>
<reference key="1">
    <citation type="journal article" date="1997" name="Microbiology">
        <title>The Bacillus subtilis L-arabinose (ara) operon: nucleotide sequence, genetic organization and expression.</title>
        <authorList>
            <person name="Sa-Nogueira I.M.G."/>
            <person name="Nogueira T.V."/>
            <person name="Soares S."/>
            <person name="de Lencastre H."/>
        </authorList>
    </citation>
    <scope>NUCLEOTIDE SEQUENCE [GENOMIC DNA]</scope>
    <scope>TRANSCRIPTIONAL REGULATION</scope>
    <source>
        <strain>168</strain>
    </source>
</reference>
<reference key="2">
    <citation type="journal article" date="1996" name="Microbiology">
        <title>The dnaB-pheA (256 degrees-240 degrees) region of the Bacillus subtilis chromosome containing genes responsible for stress responses, the utilization of plant cell walls and primary metabolism.</title>
        <authorList>
            <person name="Wipat A."/>
            <person name="Carter N."/>
            <person name="Brignell C.S."/>
            <person name="Guy J.B."/>
            <person name="Piper K."/>
            <person name="Sanders J."/>
            <person name="Emmerson P.T."/>
            <person name="Harwood C.R."/>
        </authorList>
    </citation>
    <scope>NUCLEOTIDE SEQUENCE [GENOMIC DNA]</scope>
    <source>
        <strain>168</strain>
    </source>
</reference>
<reference key="3">
    <citation type="journal article" date="1997" name="Nature">
        <title>The complete genome sequence of the Gram-positive bacterium Bacillus subtilis.</title>
        <authorList>
            <person name="Kunst F."/>
            <person name="Ogasawara N."/>
            <person name="Moszer I."/>
            <person name="Albertini A.M."/>
            <person name="Alloni G."/>
            <person name="Azevedo V."/>
            <person name="Bertero M.G."/>
            <person name="Bessieres P."/>
            <person name="Bolotin A."/>
            <person name="Borchert S."/>
            <person name="Borriss R."/>
            <person name="Boursier L."/>
            <person name="Brans A."/>
            <person name="Braun M."/>
            <person name="Brignell S.C."/>
            <person name="Bron S."/>
            <person name="Brouillet S."/>
            <person name="Bruschi C.V."/>
            <person name="Caldwell B."/>
            <person name="Capuano V."/>
            <person name="Carter N.M."/>
            <person name="Choi S.-K."/>
            <person name="Codani J.-J."/>
            <person name="Connerton I.F."/>
            <person name="Cummings N.J."/>
            <person name="Daniel R.A."/>
            <person name="Denizot F."/>
            <person name="Devine K.M."/>
            <person name="Duesterhoeft A."/>
            <person name="Ehrlich S.D."/>
            <person name="Emmerson P.T."/>
            <person name="Entian K.-D."/>
            <person name="Errington J."/>
            <person name="Fabret C."/>
            <person name="Ferrari E."/>
            <person name="Foulger D."/>
            <person name="Fritz C."/>
            <person name="Fujita M."/>
            <person name="Fujita Y."/>
            <person name="Fuma S."/>
            <person name="Galizzi A."/>
            <person name="Galleron N."/>
            <person name="Ghim S.-Y."/>
            <person name="Glaser P."/>
            <person name="Goffeau A."/>
            <person name="Golightly E.J."/>
            <person name="Grandi G."/>
            <person name="Guiseppi G."/>
            <person name="Guy B.J."/>
            <person name="Haga K."/>
            <person name="Haiech J."/>
            <person name="Harwood C.R."/>
            <person name="Henaut A."/>
            <person name="Hilbert H."/>
            <person name="Holsappel S."/>
            <person name="Hosono S."/>
            <person name="Hullo M.-F."/>
            <person name="Itaya M."/>
            <person name="Jones L.-M."/>
            <person name="Joris B."/>
            <person name="Karamata D."/>
            <person name="Kasahara Y."/>
            <person name="Klaerr-Blanchard M."/>
            <person name="Klein C."/>
            <person name="Kobayashi Y."/>
            <person name="Koetter P."/>
            <person name="Koningstein G."/>
            <person name="Krogh S."/>
            <person name="Kumano M."/>
            <person name="Kurita K."/>
            <person name="Lapidus A."/>
            <person name="Lardinois S."/>
            <person name="Lauber J."/>
            <person name="Lazarevic V."/>
            <person name="Lee S.-M."/>
            <person name="Levine A."/>
            <person name="Liu H."/>
            <person name="Masuda S."/>
            <person name="Mauel C."/>
            <person name="Medigue C."/>
            <person name="Medina N."/>
            <person name="Mellado R.P."/>
            <person name="Mizuno M."/>
            <person name="Moestl D."/>
            <person name="Nakai S."/>
            <person name="Noback M."/>
            <person name="Noone D."/>
            <person name="O'Reilly M."/>
            <person name="Ogawa K."/>
            <person name="Ogiwara A."/>
            <person name="Oudega B."/>
            <person name="Park S.-H."/>
            <person name="Parro V."/>
            <person name="Pohl T.M."/>
            <person name="Portetelle D."/>
            <person name="Porwollik S."/>
            <person name="Prescott A.M."/>
            <person name="Presecan E."/>
            <person name="Pujic P."/>
            <person name="Purnelle B."/>
            <person name="Rapoport G."/>
            <person name="Rey M."/>
            <person name="Reynolds S."/>
            <person name="Rieger M."/>
            <person name="Rivolta C."/>
            <person name="Rocha E."/>
            <person name="Roche B."/>
            <person name="Rose M."/>
            <person name="Sadaie Y."/>
            <person name="Sato T."/>
            <person name="Scanlan E."/>
            <person name="Schleich S."/>
            <person name="Schroeter R."/>
            <person name="Scoffone F."/>
            <person name="Sekiguchi J."/>
            <person name="Sekowska A."/>
            <person name="Seror S.J."/>
            <person name="Serror P."/>
            <person name="Shin B.-S."/>
            <person name="Soldo B."/>
            <person name="Sorokin A."/>
            <person name="Tacconi E."/>
            <person name="Takagi T."/>
            <person name="Takahashi H."/>
            <person name="Takemaru K."/>
            <person name="Takeuchi M."/>
            <person name="Tamakoshi A."/>
            <person name="Tanaka T."/>
            <person name="Terpstra P."/>
            <person name="Tognoni A."/>
            <person name="Tosato V."/>
            <person name="Uchiyama S."/>
            <person name="Vandenbol M."/>
            <person name="Vannier F."/>
            <person name="Vassarotti A."/>
            <person name="Viari A."/>
            <person name="Wambutt R."/>
            <person name="Wedler E."/>
            <person name="Wedler H."/>
            <person name="Weitzenegger T."/>
            <person name="Winters P."/>
            <person name="Wipat A."/>
            <person name="Yamamoto H."/>
            <person name="Yamane K."/>
            <person name="Yasumoto K."/>
            <person name="Yata K."/>
            <person name="Yoshida K."/>
            <person name="Yoshikawa H.-F."/>
            <person name="Zumstein E."/>
            <person name="Yoshikawa H."/>
            <person name="Danchin A."/>
        </authorList>
    </citation>
    <scope>NUCLEOTIDE SEQUENCE [LARGE SCALE GENOMIC DNA]</scope>
    <source>
        <strain>168</strain>
    </source>
</reference>
<reference key="4">
    <citation type="journal article" date="2009" name="Microbiology">
        <title>From a consortium sequence to a unified sequence: the Bacillus subtilis 168 reference genome a decade later.</title>
        <authorList>
            <person name="Barbe V."/>
            <person name="Cruveiller S."/>
            <person name="Kunst F."/>
            <person name="Lenoble P."/>
            <person name="Meurice G."/>
            <person name="Sekowska A."/>
            <person name="Vallenet D."/>
            <person name="Wang T."/>
            <person name="Moszer I."/>
            <person name="Medigue C."/>
            <person name="Danchin A."/>
        </authorList>
    </citation>
    <scope>SEQUENCE REVISION TO 152-154</scope>
</reference>
<reference key="5">
    <citation type="journal article" date="1999" name="Mol. Microbiol.">
        <title>Mode of action of AraR, the key regulator of L-arabinose metabolism in Bacillus subtilis.</title>
        <authorList>
            <person name="Mota L.J."/>
            <person name="Tavares P."/>
            <person name="Sa-Nogueira I.M.G."/>
        </authorList>
    </citation>
    <scope>TRANSCRIPTIONAL REGULATION</scope>
</reference>
<reference key="6">
    <citation type="journal article" date="2010" name="J. Bacteriol.">
        <title>A multitask ATPase serving different ABC-type sugar importers in Bacillus subtilis.</title>
        <authorList>
            <person name="Ferreira M.J."/>
            <person name="Sa-Nogueira I.D."/>
        </authorList>
    </citation>
    <scope>FUNCTION</scope>
    <scope>SUBUNIT</scope>
</reference>
<reference key="7">
    <citation type="journal article" date="2017" name="PLoS ONE">
        <title>The MsmX ATPase plays a crucial role in pectin mobilization by Bacillus subtilis.</title>
        <authorList>
            <person name="Ferreira M.J."/>
            <person name="Mendes A.L."/>
            <person name="de Sa-Nogueira I."/>
        </authorList>
    </citation>
    <scope>MUTAGENESIS OF ASP-180</scope>
</reference>
<accession>P94530</accession>
<accession>O05095</accession>